<evidence type="ECO:0000250" key="1"/>
<evidence type="ECO:0000255" key="2">
    <source>
        <dbReference type="HAMAP-Rule" id="MF_00100"/>
    </source>
</evidence>
<evidence type="ECO:0000256" key="3">
    <source>
        <dbReference type="SAM" id="MobiDB-lite"/>
    </source>
</evidence>
<feature type="chain" id="PRO_0000228220" description="Translation initiation factor IF-2">
    <location>
        <begin position="1"/>
        <end position="619"/>
    </location>
</feature>
<feature type="domain" description="tr-type G">
    <location>
        <begin position="121"/>
        <end position="289"/>
    </location>
</feature>
<feature type="region of interest" description="Disordered" evidence="3">
    <location>
        <begin position="1"/>
        <end position="24"/>
    </location>
</feature>
<feature type="region of interest" description="Disordered" evidence="3">
    <location>
        <begin position="90"/>
        <end position="113"/>
    </location>
</feature>
<feature type="region of interest" description="G1" evidence="1">
    <location>
        <begin position="130"/>
        <end position="137"/>
    </location>
</feature>
<feature type="region of interest" description="G2" evidence="1">
    <location>
        <begin position="155"/>
        <end position="159"/>
    </location>
</feature>
<feature type="region of interest" description="G3" evidence="1">
    <location>
        <begin position="176"/>
        <end position="179"/>
    </location>
</feature>
<feature type="region of interest" description="G4" evidence="1">
    <location>
        <begin position="230"/>
        <end position="233"/>
    </location>
</feature>
<feature type="region of interest" description="G5" evidence="1">
    <location>
        <begin position="266"/>
        <end position="268"/>
    </location>
</feature>
<feature type="compositionally biased region" description="Low complexity" evidence="3">
    <location>
        <begin position="1"/>
        <end position="18"/>
    </location>
</feature>
<feature type="compositionally biased region" description="Low complexity" evidence="3">
    <location>
        <begin position="98"/>
        <end position="111"/>
    </location>
</feature>
<feature type="binding site" evidence="2">
    <location>
        <begin position="130"/>
        <end position="137"/>
    </location>
    <ligand>
        <name>GTP</name>
        <dbReference type="ChEBI" id="CHEBI:37565"/>
    </ligand>
</feature>
<feature type="binding site" evidence="2">
    <location>
        <begin position="176"/>
        <end position="180"/>
    </location>
    <ligand>
        <name>GTP</name>
        <dbReference type="ChEBI" id="CHEBI:37565"/>
    </ligand>
</feature>
<feature type="binding site" evidence="2">
    <location>
        <begin position="230"/>
        <end position="233"/>
    </location>
    <ligand>
        <name>GTP</name>
        <dbReference type="ChEBI" id="CHEBI:37565"/>
    </ligand>
</feature>
<protein>
    <recommendedName>
        <fullName evidence="2">Translation initiation factor IF-2</fullName>
    </recommendedName>
</protein>
<reference key="1">
    <citation type="journal article" date="2004" name="Nat. Genet.">
        <title>Reductive evolution suggested from the complete genome sequence of a plant-pathogenic phytoplasma.</title>
        <authorList>
            <person name="Oshima K."/>
            <person name="Kakizawa S."/>
            <person name="Nishigawa H."/>
            <person name="Jung H.-Y."/>
            <person name="Wei W."/>
            <person name="Suzuki S."/>
            <person name="Arashida R."/>
            <person name="Nakata D."/>
            <person name="Miyata S."/>
            <person name="Ugaki M."/>
            <person name="Namba S."/>
        </authorList>
    </citation>
    <scope>NUCLEOTIDE SEQUENCE [LARGE SCALE GENOMIC DNA]</scope>
    <source>
        <strain>OY-M</strain>
    </source>
</reference>
<dbReference type="EMBL" id="AP006628">
    <property type="protein sequence ID" value="BAD04235.1"/>
    <property type="molecule type" value="Genomic_DNA"/>
</dbReference>
<dbReference type="SMR" id="Q6YR66"/>
<dbReference type="STRING" id="262768.PAM_150"/>
<dbReference type="KEGG" id="poy:PAM_150"/>
<dbReference type="eggNOG" id="COG0532">
    <property type="taxonomic scope" value="Bacteria"/>
</dbReference>
<dbReference type="HOGENOM" id="CLU_006301_5_1_14"/>
<dbReference type="BioCyc" id="OYEL262768:G1G26-182-MONOMER"/>
<dbReference type="Proteomes" id="UP000002523">
    <property type="component" value="Chromosome"/>
</dbReference>
<dbReference type="GO" id="GO:0005829">
    <property type="term" value="C:cytosol"/>
    <property type="evidence" value="ECO:0007669"/>
    <property type="project" value="TreeGrafter"/>
</dbReference>
<dbReference type="GO" id="GO:0005525">
    <property type="term" value="F:GTP binding"/>
    <property type="evidence" value="ECO:0007669"/>
    <property type="project" value="UniProtKB-KW"/>
</dbReference>
<dbReference type="GO" id="GO:0003924">
    <property type="term" value="F:GTPase activity"/>
    <property type="evidence" value="ECO:0007669"/>
    <property type="project" value="UniProtKB-UniRule"/>
</dbReference>
<dbReference type="GO" id="GO:0003743">
    <property type="term" value="F:translation initiation factor activity"/>
    <property type="evidence" value="ECO:0007669"/>
    <property type="project" value="UniProtKB-UniRule"/>
</dbReference>
<dbReference type="CDD" id="cd01887">
    <property type="entry name" value="IF2_eIF5B"/>
    <property type="match status" value="1"/>
</dbReference>
<dbReference type="CDD" id="cd03702">
    <property type="entry name" value="IF2_mtIF2_II"/>
    <property type="match status" value="1"/>
</dbReference>
<dbReference type="CDD" id="cd03692">
    <property type="entry name" value="mtIF2_IVc"/>
    <property type="match status" value="1"/>
</dbReference>
<dbReference type="FunFam" id="2.40.30.10:FF:000007">
    <property type="entry name" value="Translation initiation factor IF-2"/>
    <property type="match status" value="1"/>
</dbReference>
<dbReference type="FunFam" id="2.40.30.10:FF:000008">
    <property type="entry name" value="Translation initiation factor IF-2"/>
    <property type="match status" value="1"/>
</dbReference>
<dbReference type="FunFam" id="3.40.50.10050:FF:000001">
    <property type="entry name" value="Translation initiation factor IF-2"/>
    <property type="match status" value="1"/>
</dbReference>
<dbReference type="FunFam" id="3.40.50.300:FF:000019">
    <property type="entry name" value="Translation initiation factor IF-2"/>
    <property type="match status" value="1"/>
</dbReference>
<dbReference type="Gene3D" id="3.40.50.300">
    <property type="entry name" value="P-loop containing nucleotide triphosphate hydrolases"/>
    <property type="match status" value="1"/>
</dbReference>
<dbReference type="Gene3D" id="2.40.30.10">
    <property type="entry name" value="Translation factors"/>
    <property type="match status" value="2"/>
</dbReference>
<dbReference type="Gene3D" id="3.40.50.10050">
    <property type="entry name" value="Translation initiation factor IF- 2, domain 3"/>
    <property type="match status" value="1"/>
</dbReference>
<dbReference type="HAMAP" id="MF_00100_B">
    <property type="entry name" value="IF_2_B"/>
    <property type="match status" value="1"/>
</dbReference>
<dbReference type="InterPro" id="IPR053905">
    <property type="entry name" value="EF-G-like_DII"/>
</dbReference>
<dbReference type="InterPro" id="IPR044145">
    <property type="entry name" value="IF2_II"/>
</dbReference>
<dbReference type="InterPro" id="IPR006847">
    <property type="entry name" value="IF2_N"/>
</dbReference>
<dbReference type="InterPro" id="IPR027417">
    <property type="entry name" value="P-loop_NTPase"/>
</dbReference>
<dbReference type="InterPro" id="IPR005225">
    <property type="entry name" value="Small_GTP-bd"/>
</dbReference>
<dbReference type="InterPro" id="IPR000795">
    <property type="entry name" value="T_Tr_GTP-bd_dom"/>
</dbReference>
<dbReference type="InterPro" id="IPR000178">
    <property type="entry name" value="TF_IF2_bacterial-like"/>
</dbReference>
<dbReference type="InterPro" id="IPR015760">
    <property type="entry name" value="TIF_IF2"/>
</dbReference>
<dbReference type="InterPro" id="IPR023115">
    <property type="entry name" value="TIF_IF2_dom3"/>
</dbReference>
<dbReference type="InterPro" id="IPR036925">
    <property type="entry name" value="TIF_IF2_dom3_sf"/>
</dbReference>
<dbReference type="InterPro" id="IPR009000">
    <property type="entry name" value="Transl_B-barrel_sf"/>
</dbReference>
<dbReference type="NCBIfam" id="TIGR00487">
    <property type="entry name" value="IF-2"/>
    <property type="match status" value="1"/>
</dbReference>
<dbReference type="NCBIfam" id="TIGR00231">
    <property type="entry name" value="small_GTP"/>
    <property type="match status" value="1"/>
</dbReference>
<dbReference type="PANTHER" id="PTHR43381:SF5">
    <property type="entry name" value="TR-TYPE G DOMAIN-CONTAINING PROTEIN"/>
    <property type="match status" value="1"/>
</dbReference>
<dbReference type="PANTHER" id="PTHR43381">
    <property type="entry name" value="TRANSLATION INITIATION FACTOR IF-2-RELATED"/>
    <property type="match status" value="1"/>
</dbReference>
<dbReference type="Pfam" id="PF22042">
    <property type="entry name" value="EF-G_D2"/>
    <property type="match status" value="1"/>
</dbReference>
<dbReference type="Pfam" id="PF00009">
    <property type="entry name" value="GTP_EFTU"/>
    <property type="match status" value="1"/>
</dbReference>
<dbReference type="Pfam" id="PF11987">
    <property type="entry name" value="IF-2"/>
    <property type="match status" value="1"/>
</dbReference>
<dbReference type="Pfam" id="PF04760">
    <property type="entry name" value="IF2_N"/>
    <property type="match status" value="1"/>
</dbReference>
<dbReference type="SUPFAM" id="SSF52156">
    <property type="entry name" value="Initiation factor IF2/eIF5b, domain 3"/>
    <property type="match status" value="1"/>
</dbReference>
<dbReference type="SUPFAM" id="SSF52540">
    <property type="entry name" value="P-loop containing nucleoside triphosphate hydrolases"/>
    <property type="match status" value="1"/>
</dbReference>
<dbReference type="SUPFAM" id="SSF50447">
    <property type="entry name" value="Translation proteins"/>
    <property type="match status" value="2"/>
</dbReference>
<dbReference type="PROSITE" id="PS51722">
    <property type="entry name" value="G_TR_2"/>
    <property type="match status" value="1"/>
</dbReference>
<sequence>MTLNKKTNNENSSKTTPKLSKETDLRNDFASKNYVFNPQDKVFQIAQVFGITSAVLIKKLLQLGLKADVNQTLEKDIVELLAKDYNIQVSEPQEKHTPPQLQPQTPSLTKTKPNQKLNLQKKSPIVTIMGHVDHGKTTLLDAIRKTRVVDQEFGGITQHIGAYQVEYQGNKITFIDTPGHEAFDKMRARGAKITDICILVVAVDDCVKPQTLEALKHAQKAQIPIIVALNKIDKPNNNTQQIMQELSSYDLLPEEWGGTTPYIAISALKREGLEKILEIILLVSEIQNLQANPDQKAQGTVIEASLDKSLGLVATFIVSDGNLKVGDIVVAGASYGKIRSMEDENKKKLTKALPSQPVRVAGLKEVPQAGDIFYAVANEKQARQIVAEKKSQTKENLAKTLSPLNLEDILQDLETEKPQELNIILKADTQGSLEALQGMIAKIKVSDLKVQLLRAAVGTITETDIAFAKSSDSLLIGFNIKPASSTLKSAQRQEVKITIHNVIYRIIEDIEQKLKSMIKPTFEEVVTGKVEVRKIFNISKVGNIAGCYVTQGIVNNSDFAKVMRNDEVLFKGKIASLKHLKDNIKSAKQGYECGILLDGFNDFEINDIIETSKLSKVEE</sequence>
<comment type="function">
    <text evidence="2">One of the essential components for the initiation of protein synthesis. Protects formylmethionyl-tRNA from spontaneous hydrolysis and promotes its binding to the 30S ribosomal subunits. Also involved in the hydrolysis of GTP during the formation of the 70S ribosomal complex.</text>
</comment>
<comment type="subcellular location">
    <subcellularLocation>
        <location evidence="2">Cytoplasm</location>
    </subcellularLocation>
</comment>
<comment type="similarity">
    <text evidence="2">Belongs to the TRAFAC class translation factor GTPase superfamily. Classic translation factor GTPase family. IF-2 subfamily.</text>
</comment>
<organism>
    <name type="scientific">Onion yellows phytoplasma (strain OY-M)</name>
    <dbReference type="NCBI Taxonomy" id="262768"/>
    <lineage>
        <taxon>Bacteria</taxon>
        <taxon>Bacillati</taxon>
        <taxon>Mycoplasmatota</taxon>
        <taxon>Mollicutes</taxon>
        <taxon>Acholeplasmatales</taxon>
        <taxon>Acholeplasmataceae</taxon>
        <taxon>Candidatus Phytoplasma</taxon>
        <taxon>16SrI (Aster yellows group)</taxon>
    </lineage>
</organism>
<gene>
    <name evidence="2" type="primary">infB</name>
    <name type="ordered locus">PAM_150</name>
</gene>
<keyword id="KW-0963">Cytoplasm</keyword>
<keyword id="KW-0342">GTP-binding</keyword>
<keyword id="KW-0396">Initiation factor</keyword>
<keyword id="KW-0547">Nucleotide-binding</keyword>
<keyword id="KW-0648">Protein biosynthesis</keyword>
<accession>Q6YR66</accession>
<proteinExistence type="inferred from homology"/>
<name>IF2_ONYPE</name>